<sequence>MTPESVMALGYEAMKVALALAAPPLMAALLSGLLISLLQAATQINEMTLSFIPKILTVFFTLVIAGPWMLNLMLDYMRTLFGQLPNIIG</sequence>
<organism>
    <name type="scientific">Pectobacterium carotovorum subsp. carotovorum</name>
    <name type="common">Erwinia carotovora subsp. carotovora</name>
    <dbReference type="NCBI Taxonomy" id="555"/>
    <lineage>
        <taxon>Bacteria</taxon>
        <taxon>Pseudomonadati</taxon>
        <taxon>Pseudomonadota</taxon>
        <taxon>Gammaproteobacteria</taxon>
        <taxon>Enterobacterales</taxon>
        <taxon>Pectobacteriaceae</taxon>
        <taxon>Pectobacterium</taxon>
    </lineage>
</organism>
<keyword id="KW-0975">Bacterial flagellum</keyword>
<keyword id="KW-1003">Cell membrane</keyword>
<keyword id="KW-0472">Membrane</keyword>
<keyword id="KW-0812">Transmembrane</keyword>
<keyword id="KW-1133">Transmembrane helix</keyword>
<evidence type="ECO:0000250" key="1"/>
<evidence type="ECO:0000255" key="2"/>
<evidence type="ECO:0000305" key="3"/>
<feature type="chain" id="PRO_0000129099" description="Flagellar biosynthetic protein FliQ">
    <location>
        <begin position="1"/>
        <end position="89"/>
    </location>
</feature>
<feature type="transmembrane region" description="Helical" evidence="2">
    <location>
        <begin position="16"/>
        <end position="38"/>
    </location>
</feature>
<feature type="transmembrane region" description="Helical" evidence="2">
    <location>
        <begin position="55"/>
        <end position="74"/>
    </location>
</feature>
<accession>P34201</accession>
<proteinExistence type="inferred from homology"/>
<gene>
    <name type="primary">fliQ</name>
    <name type="synonym">mopD</name>
</gene>
<reference key="1">
    <citation type="journal article" date="1993" name="Mol. Microbiol.">
        <title>A pleiotropic reduced virulence (Rvi-) mutant of Erwinia carotovora subspecies atroseptica is defective in flagella assembly proteins that are conserved in plant and animal bacterial pathogens.</title>
        <authorList>
            <person name="Mulholland V."/>
            <person name="Hinton J.C.D."/>
            <person name="Sidebotham J."/>
            <person name="Toth I.K."/>
            <person name="Hyman L.J."/>
            <person name="Perombelon M.C.M."/>
            <person name="Reeves P.J."/>
            <person name="Salmond G.P.C."/>
        </authorList>
    </citation>
    <scope>NUCLEOTIDE SEQUENCE [GENOMIC DNA]</scope>
    <source>
        <strain>SCRI 193</strain>
    </source>
</reference>
<name>FLIQ_PECCC</name>
<comment type="function">
    <text>Role in flagellar biosynthesis.</text>
</comment>
<comment type="subcellular location">
    <subcellularLocation>
        <location evidence="3">Cell membrane</location>
        <topology evidence="3">Multi-pass membrane protein</topology>
    </subcellularLocation>
    <subcellularLocation>
        <location evidence="1">Bacterial flagellum basal body</location>
    </subcellularLocation>
</comment>
<comment type="similarity">
    <text evidence="3">Belongs to the FliQ/MopD/SpaQ family.</text>
</comment>
<protein>
    <recommendedName>
        <fullName>Flagellar biosynthetic protein FliQ</fullName>
    </recommendedName>
    <alternativeName>
        <fullName>Flagellar biosynthetic protein MopD</fullName>
    </alternativeName>
</protein>
<dbReference type="EMBL" id="X72969">
    <property type="protein sequence ID" value="CAA51477.1"/>
    <property type="molecule type" value="Genomic_DNA"/>
</dbReference>
<dbReference type="PIR" id="S35277">
    <property type="entry name" value="S35277"/>
</dbReference>
<dbReference type="RefSeq" id="WP_010279609.1">
    <property type="nucleotide sequence ID" value="NZ_QHMC01000001.1"/>
</dbReference>
<dbReference type="SMR" id="P34201"/>
<dbReference type="GeneID" id="93390797"/>
<dbReference type="GO" id="GO:0009425">
    <property type="term" value="C:bacterial-type flagellum basal body"/>
    <property type="evidence" value="ECO:0007669"/>
    <property type="project" value="UniProtKB-SubCell"/>
</dbReference>
<dbReference type="GO" id="GO:0005886">
    <property type="term" value="C:plasma membrane"/>
    <property type="evidence" value="ECO:0007669"/>
    <property type="project" value="UniProtKB-SubCell"/>
</dbReference>
<dbReference type="GO" id="GO:0044780">
    <property type="term" value="P:bacterial-type flagellum assembly"/>
    <property type="evidence" value="ECO:0007669"/>
    <property type="project" value="InterPro"/>
</dbReference>
<dbReference type="GO" id="GO:0009306">
    <property type="term" value="P:protein secretion"/>
    <property type="evidence" value="ECO:0007669"/>
    <property type="project" value="InterPro"/>
</dbReference>
<dbReference type="InterPro" id="IPR002191">
    <property type="entry name" value="Bac_export_3"/>
</dbReference>
<dbReference type="InterPro" id="IPR006305">
    <property type="entry name" value="FliQ"/>
</dbReference>
<dbReference type="NCBIfam" id="TIGR01402">
    <property type="entry name" value="fliQ"/>
    <property type="match status" value="1"/>
</dbReference>
<dbReference type="PANTHER" id="PTHR34040">
    <property type="entry name" value="FLAGELLAR BIOSYNTHETIC PROTEIN FLIQ"/>
    <property type="match status" value="1"/>
</dbReference>
<dbReference type="PANTHER" id="PTHR34040:SF2">
    <property type="entry name" value="FLAGELLAR BIOSYNTHETIC PROTEIN FLIQ"/>
    <property type="match status" value="1"/>
</dbReference>
<dbReference type="Pfam" id="PF01313">
    <property type="entry name" value="Bac_export_3"/>
    <property type="match status" value="1"/>
</dbReference>
<dbReference type="PIRSF" id="PIRSF004669">
    <property type="entry name" value="FliQ"/>
    <property type="match status" value="1"/>
</dbReference>
<dbReference type="PRINTS" id="PR00952">
    <property type="entry name" value="TYPE3IMQPROT"/>
</dbReference>